<name>ISPD_YERP3</name>
<evidence type="ECO:0000255" key="1">
    <source>
        <dbReference type="HAMAP-Rule" id="MF_00108"/>
    </source>
</evidence>
<reference key="1">
    <citation type="journal article" date="2007" name="PLoS Genet.">
        <title>The complete genome sequence of Yersinia pseudotuberculosis IP31758, the causative agent of Far East scarlet-like fever.</title>
        <authorList>
            <person name="Eppinger M."/>
            <person name="Rosovitz M.J."/>
            <person name="Fricke W.F."/>
            <person name="Rasko D.A."/>
            <person name="Kokorina G."/>
            <person name="Fayolle C."/>
            <person name="Lindler L.E."/>
            <person name="Carniel E."/>
            <person name="Ravel J."/>
        </authorList>
    </citation>
    <scope>NUCLEOTIDE SEQUENCE [LARGE SCALE GENOMIC DNA]</scope>
    <source>
        <strain>IP 31758</strain>
    </source>
</reference>
<proteinExistence type="inferred from homology"/>
<gene>
    <name evidence="1" type="primary">ispD</name>
    <name type="ordered locus">YpsIP31758_3299</name>
</gene>
<accession>A7FLX8</accession>
<protein>
    <recommendedName>
        <fullName evidence="1">2-C-methyl-D-erythritol 4-phosphate cytidylyltransferase</fullName>
        <ecNumber evidence="1">2.7.7.60</ecNumber>
    </recommendedName>
    <alternativeName>
        <fullName evidence="1">4-diphosphocytidyl-2C-methyl-D-erythritol synthase</fullName>
    </alternativeName>
    <alternativeName>
        <fullName evidence="1">MEP cytidylyltransferase</fullName>
        <shortName evidence="1">MCT</shortName>
    </alternativeName>
</protein>
<sequence>MSNFAVSLPEVIAVLPAAGIGSRMLADCPKQYLTVGGKTIIEHAIFSLLHHPRIQRVIVVIHPQDTQFSRLSVAQDPRISTVYGGDQRANSVMAGLQLAGQAEWVLVHDAARPCLHLDDLSRLLSITECSQVGGILAAPVRDTMKRAEPGIQAIAHTVDRQDLWHALTPQLFPLELLKLCLSRALREGVAVTDEASALEHCGYHPILVTGRSDNIKVTRPEDLALAEFYLTQRQSLNNDSL</sequence>
<dbReference type="EC" id="2.7.7.60" evidence="1"/>
<dbReference type="EMBL" id="CP000720">
    <property type="protein sequence ID" value="ABS47614.1"/>
    <property type="molecule type" value="Genomic_DNA"/>
</dbReference>
<dbReference type="RefSeq" id="WP_012105643.1">
    <property type="nucleotide sequence ID" value="NC_009708.1"/>
</dbReference>
<dbReference type="SMR" id="A7FLX8"/>
<dbReference type="GeneID" id="49787222"/>
<dbReference type="KEGG" id="ypi:YpsIP31758_3299"/>
<dbReference type="HOGENOM" id="CLU_061281_3_1_6"/>
<dbReference type="UniPathway" id="UPA00056">
    <property type="reaction ID" value="UER00093"/>
</dbReference>
<dbReference type="Proteomes" id="UP000002412">
    <property type="component" value="Chromosome"/>
</dbReference>
<dbReference type="GO" id="GO:0050518">
    <property type="term" value="F:2-C-methyl-D-erythritol 4-phosphate cytidylyltransferase activity"/>
    <property type="evidence" value="ECO:0007669"/>
    <property type="project" value="UniProtKB-UniRule"/>
</dbReference>
<dbReference type="GO" id="GO:0019288">
    <property type="term" value="P:isopentenyl diphosphate biosynthetic process, methylerythritol 4-phosphate pathway"/>
    <property type="evidence" value="ECO:0007669"/>
    <property type="project" value="UniProtKB-UniRule"/>
</dbReference>
<dbReference type="CDD" id="cd02516">
    <property type="entry name" value="CDP-ME_synthetase"/>
    <property type="match status" value="1"/>
</dbReference>
<dbReference type="FunFam" id="3.90.550.10:FF:000003">
    <property type="entry name" value="2-C-methyl-D-erythritol 4-phosphate cytidylyltransferase"/>
    <property type="match status" value="1"/>
</dbReference>
<dbReference type="Gene3D" id="3.90.550.10">
    <property type="entry name" value="Spore Coat Polysaccharide Biosynthesis Protein SpsA, Chain A"/>
    <property type="match status" value="1"/>
</dbReference>
<dbReference type="HAMAP" id="MF_00108">
    <property type="entry name" value="IspD"/>
    <property type="match status" value="1"/>
</dbReference>
<dbReference type="InterPro" id="IPR001228">
    <property type="entry name" value="IspD"/>
</dbReference>
<dbReference type="InterPro" id="IPR034683">
    <property type="entry name" value="IspD/TarI"/>
</dbReference>
<dbReference type="InterPro" id="IPR050088">
    <property type="entry name" value="IspD/TarI_cytidylyltransf_bact"/>
</dbReference>
<dbReference type="InterPro" id="IPR018294">
    <property type="entry name" value="ISPD_synthase_CS"/>
</dbReference>
<dbReference type="InterPro" id="IPR029044">
    <property type="entry name" value="Nucleotide-diphossugar_trans"/>
</dbReference>
<dbReference type="NCBIfam" id="TIGR00453">
    <property type="entry name" value="ispD"/>
    <property type="match status" value="1"/>
</dbReference>
<dbReference type="PANTHER" id="PTHR32125">
    <property type="entry name" value="2-C-METHYL-D-ERYTHRITOL 4-PHOSPHATE CYTIDYLYLTRANSFERASE, CHLOROPLASTIC"/>
    <property type="match status" value="1"/>
</dbReference>
<dbReference type="PANTHER" id="PTHR32125:SF4">
    <property type="entry name" value="2-C-METHYL-D-ERYTHRITOL 4-PHOSPHATE CYTIDYLYLTRANSFERASE, CHLOROPLASTIC"/>
    <property type="match status" value="1"/>
</dbReference>
<dbReference type="Pfam" id="PF01128">
    <property type="entry name" value="IspD"/>
    <property type="match status" value="1"/>
</dbReference>
<dbReference type="SUPFAM" id="SSF53448">
    <property type="entry name" value="Nucleotide-diphospho-sugar transferases"/>
    <property type="match status" value="1"/>
</dbReference>
<dbReference type="PROSITE" id="PS01295">
    <property type="entry name" value="ISPD"/>
    <property type="match status" value="1"/>
</dbReference>
<keyword id="KW-0414">Isoprene biosynthesis</keyword>
<keyword id="KW-0548">Nucleotidyltransferase</keyword>
<keyword id="KW-0808">Transferase</keyword>
<comment type="function">
    <text evidence="1">Catalyzes the formation of 4-diphosphocytidyl-2-C-methyl-D-erythritol from CTP and 2-C-methyl-D-erythritol 4-phosphate (MEP).</text>
</comment>
<comment type="catalytic activity">
    <reaction evidence="1">
        <text>2-C-methyl-D-erythritol 4-phosphate + CTP + H(+) = 4-CDP-2-C-methyl-D-erythritol + diphosphate</text>
        <dbReference type="Rhea" id="RHEA:13429"/>
        <dbReference type="ChEBI" id="CHEBI:15378"/>
        <dbReference type="ChEBI" id="CHEBI:33019"/>
        <dbReference type="ChEBI" id="CHEBI:37563"/>
        <dbReference type="ChEBI" id="CHEBI:57823"/>
        <dbReference type="ChEBI" id="CHEBI:58262"/>
        <dbReference type="EC" id="2.7.7.60"/>
    </reaction>
</comment>
<comment type="pathway">
    <text evidence="1">Isoprenoid biosynthesis; isopentenyl diphosphate biosynthesis via DXP pathway; isopentenyl diphosphate from 1-deoxy-D-xylulose 5-phosphate: step 2/6.</text>
</comment>
<comment type="subunit">
    <text evidence="1">Homodimer.</text>
</comment>
<comment type="similarity">
    <text evidence="1">Belongs to the IspD/TarI cytidylyltransferase family. IspD subfamily.</text>
</comment>
<feature type="chain" id="PRO_1000057721" description="2-C-methyl-D-erythritol 4-phosphate cytidylyltransferase">
    <location>
        <begin position="1"/>
        <end position="241"/>
    </location>
</feature>
<feature type="site" description="Transition state stabilizer" evidence="1">
    <location>
        <position position="23"/>
    </location>
</feature>
<feature type="site" description="Transition state stabilizer" evidence="1">
    <location>
        <position position="30"/>
    </location>
</feature>
<feature type="site" description="Positions MEP for the nucleophilic attack" evidence="1">
    <location>
        <position position="160"/>
    </location>
</feature>
<feature type="site" description="Positions MEP for the nucleophilic attack" evidence="1">
    <location>
        <position position="216"/>
    </location>
</feature>
<organism>
    <name type="scientific">Yersinia pseudotuberculosis serotype O:1b (strain IP 31758)</name>
    <dbReference type="NCBI Taxonomy" id="349747"/>
    <lineage>
        <taxon>Bacteria</taxon>
        <taxon>Pseudomonadati</taxon>
        <taxon>Pseudomonadota</taxon>
        <taxon>Gammaproteobacteria</taxon>
        <taxon>Enterobacterales</taxon>
        <taxon>Yersiniaceae</taxon>
        <taxon>Yersinia</taxon>
    </lineage>
</organism>